<dbReference type="EMBL" id="CH983831">
    <property type="protein sequence ID" value="EDX16560.1"/>
    <property type="molecule type" value="Genomic_DNA"/>
</dbReference>
<dbReference type="SMR" id="B4NUB3"/>
<dbReference type="STRING" id="7240.B4NUB3"/>
<dbReference type="EnsemblMetazoa" id="FBtr0224443">
    <property type="protein sequence ID" value="FBpp0222935"/>
    <property type="gene ID" value="FBgn0195867"/>
</dbReference>
<dbReference type="EnsemblMetazoa" id="XM_002076930.4">
    <property type="protein sequence ID" value="XP_002076966.1"/>
    <property type="gene ID" value="LOC6740083"/>
</dbReference>
<dbReference type="GeneID" id="6740083"/>
<dbReference type="KEGG" id="dsi:Dsimw501_GD24533"/>
<dbReference type="CTD" id="45848"/>
<dbReference type="HOGENOM" id="CLU_134052_1_2_1"/>
<dbReference type="OMA" id="RLMCRNI"/>
<dbReference type="OrthoDB" id="6221744at2759"/>
<dbReference type="PhylomeDB" id="B4NUB3"/>
<dbReference type="Proteomes" id="UP000000304">
    <property type="component" value="Unassembled WGS sequence"/>
</dbReference>
<dbReference type="Bgee" id="FBgn0195867">
    <property type="expression patterns" value="Expressed in embryo and 3 other cell types or tissues"/>
</dbReference>
<dbReference type="GO" id="GO:0005737">
    <property type="term" value="C:cytoplasm"/>
    <property type="evidence" value="ECO:0007669"/>
    <property type="project" value="UniProtKB-SubCell"/>
</dbReference>
<dbReference type="GO" id="GO:0071819">
    <property type="term" value="C:DUBm complex"/>
    <property type="evidence" value="ECO:0007669"/>
    <property type="project" value="UniProtKB-UniRule"/>
</dbReference>
<dbReference type="GO" id="GO:0034399">
    <property type="term" value="C:nuclear periphery"/>
    <property type="evidence" value="ECO:0007669"/>
    <property type="project" value="EnsemblMetazoa"/>
</dbReference>
<dbReference type="GO" id="GO:0005643">
    <property type="term" value="C:nuclear pore"/>
    <property type="evidence" value="ECO:0000250"/>
    <property type="project" value="UniProtKB"/>
</dbReference>
<dbReference type="GO" id="GO:0005654">
    <property type="term" value="C:nucleoplasm"/>
    <property type="evidence" value="ECO:0007669"/>
    <property type="project" value="UniProtKB-SubCell"/>
</dbReference>
<dbReference type="GO" id="GO:0000124">
    <property type="term" value="C:SAGA complex"/>
    <property type="evidence" value="ECO:0000250"/>
    <property type="project" value="UniProtKB"/>
</dbReference>
<dbReference type="GO" id="GO:0070390">
    <property type="term" value="C:transcription export complex 2"/>
    <property type="evidence" value="ECO:0007669"/>
    <property type="project" value="UniProtKB-UniRule"/>
</dbReference>
<dbReference type="GO" id="GO:0070742">
    <property type="term" value="F:C2H2 zinc finger domain binding"/>
    <property type="evidence" value="ECO:0007669"/>
    <property type="project" value="EnsemblMetazoa"/>
</dbReference>
<dbReference type="GO" id="GO:0043035">
    <property type="term" value="F:chromatin insulator sequence binding"/>
    <property type="evidence" value="ECO:0000250"/>
    <property type="project" value="UniProtKB"/>
</dbReference>
<dbReference type="GO" id="GO:0001094">
    <property type="term" value="F:TFIID-class transcription factor complex binding"/>
    <property type="evidence" value="ECO:0007669"/>
    <property type="project" value="EnsemblMetazoa"/>
</dbReference>
<dbReference type="GO" id="GO:0003713">
    <property type="term" value="F:transcription coactivator activity"/>
    <property type="evidence" value="ECO:0007669"/>
    <property type="project" value="UniProtKB-UniRule"/>
</dbReference>
<dbReference type="GO" id="GO:0033696">
    <property type="term" value="P:heterochromatin boundary formation"/>
    <property type="evidence" value="ECO:0007669"/>
    <property type="project" value="EnsemblMetazoa"/>
</dbReference>
<dbReference type="GO" id="GO:0006406">
    <property type="term" value="P:mRNA export from nucleus"/>
    <property type="evidence" value="ECO:0000250"/>
    <property type="project" value="UniProtKB"/>
</dbReference>
<dbReference type="GO" id="GO:0016973">
    <property type="term" value="P:poly(A)+ mRNA export from nucleus"/>
    <property type="evidence" value="ECO:0007669"/>
    <property type="project" value="EnsemblMetazoa"/>
</dbReference>
<dbReference type="GO" id="GO:0045944">
    <property type="term" value="P:positive regulation of transcription by RNA polymerase II"/>
    <property type="evidence" value="ECO:0000250"/>
    <property type="project" value="UniProtKB"/>
</dbReference>
<dbReference type="GO" id="GO:0015031">
    <property type="term" value="P:protein transport"/>
    <property type="evidence" value="ECO:0007669"/>
    <property type="project" value="UniProtKB-KW"/>
</dbReference>
<dbReference type="GO" id="GO:0006368">
    <property type="term" value="P:transcription elongation by RNA polymerase II"/>
    <property type="evidence" value="ECO:0007669"/>
    <property type="project" value="UniProtKB-UniRule"/>
</dbReference>
<dbReference type="FunFam" id="1.10.246.140:FF:000002">
    <property type="entry name" value="Enhancer of yellow 2 transcription factor"/>
    <property type="match status" value="1"/>
</dbReference>
<dbReference type="Gene3D" id="1.10.246.140">
    <property type="match status" value="1"/>
</dbReference>
<dbReference type="HAMAP" id="MF_03046">
    <property type="entry name" value="ENY2_Sus1"/>
    <property type="match status" value="1"/>
</dbReference>
<dbReference type="InterPro" id="IPR018783">
    <property type="entry name" value="TF_ENY2"/>
</dbReference>
<dbReference type="InterPro" id="IPR038212">
    <property type="entry name" value="TF_EnY2_sf"/>
</dbReference>
<dbReference type="PANTHER" id="PTHR12514">
    <property type="entry name" value="ENHANCER OF YELLOW 2 TRANSCRIPTION FACTOR"/>
    <property type="match status" value="1"/>
</dbReference>
<dbReference type="Pfam" id="PF10163">
    <property type="entry name" value="EnY2"/>
    <property type="match status" value="1"/>
</dbReference>
<protein>
    <recommendedName>
        <fullName evidence="2">Enhancer of yellow 2 transcription factor</fullName>
    </recommendedName>
</protein>
<name>ENY2_DROSI</name>
<gene>
    <name evidence="2" type="primary">e(y)2</name>
    <name type="ORF">GD24533</name>
</gene>
<accession>B4NUB3</accession>
<organism>
    <name type="scientific">Drosophila simulans</name>
    <name type="common">Fruit fly</name>
    <dbReference type="NCBI Taxonomy" id="7240"/>
    <lineage>
        <taxon>Eukaryota</taxon>
        <taxon>Metazoa</taxon>
        <taxon>Ecdysozoa</taxon>
        <taxon>Arthropoda</taxon>
        <taxon>Hexapoda</taxon>
        <taxon>Insecta</taxon>
        <taxon>Pterygota</taxon>
        <taxon>Neoptera</taxon>
        <taxon>Endopterygota</taxon>
        <taxon>Diptera</taxon>
        <taxon>Brachycera</taxon>
        <taxon>Muscomorpha</taxon>
        <taxon>Ephydroidea</taxon>
        <taxon>Drosophilidae</taxon>
        <taxon>Drosophila</taxon>
        <taxon>Sophophora</taxon>
    </lineage>
</organism>
<comment type="function">
    <text evidence="1">Involved in mRNA export coupled transcription activation by association with both the AMEX and the SAGA complexes. The SAGA complex is a multiprotein complex that activates transcription by remodeling chromatin and mediating histone acetylation and deubiquitination. Within the SAGA complex, participates in a subcomplex that specifically deubiquitinates histone H2B. The SAGA complex is recruited to specific gene promoters by activators, where it is required for transcription. Required for nuclear receptor-mediated transactivation. Involved in transcription elongation by recruiting the THO complex onto nascent mRNA. The AMEX complex functions in docking export-competent ribonucleoprotein particles (mRNPs) to the nuclear entrance of the nuclear pore complex (nuclear basket). AMEX participates in mRNA export and accurate chromatin positioning in the nucleus by tethering genes to the nuclear periphery (By similarity).</text>
</comment>
<comment type="subunit">
    <text evidence="2">Component of the nuclear pore complex (NPC)-associated AMEX complex (anchoring and mRNA export complex), composed of at least e(y)2 and xmas-2. Component of the SAGA transcription coactivator-HAT complexes, at least composed of Ada2b, e(y)2, Pcaf/Gcn5, Taf10 and Nipped-A/Trrap. Within the SAGA complex, e(y)2, Sgf11, and not/nonstop form an additional subcomplex of SAGA called the DUB module (deubiquitination module). Component of the THO complex, composed of at least e(y)2, HPR1, THO2, THOC5, THOC6 and THOC7. Interacts with e(y)1. Interacts with su(Hw) (via zinc fingers). Interacts with xmas-2; required for localization to the nuclear periphery. Interacts with the nuclear pore complex (NPC).</text>
</comment>
<comment type="subcellular location">
    <subcellularLocation>
        <location evidence="2">Nucleus</location>
        <location evidence="2">Nucleoplasm</location>
    </subcellularLocation>
    <subcellularLocation>
        <location evidence="2">Cytoplasm</location>
    </subcellularLocation>
</comment>
<comment type="similarity">
    <text evidence="2">Belongs to the ENY2 family.</text>
</comment>
<evidence type="ECO:0000250" key="1"/>
<evidence type="ECO:0000255" key="2">
    <source>
        <dbReference type="HAMAP-Rule" id="MF_03046"/>
    </source>
</evidence>
<proteinExistence type="inferred from homology"/>
<feature type="chain" id="PRO_0000367560" description="Enhancer of yellow 2 transcription factor">
    <location>
        <begin position="1"/>
        <end position="101"/>
    </location>
</feature>
<sequence length="101" mass="11472">MSVSSAVDQYTVLTGDRSKIKDLLCSRLTECGWRDEVRLMCRNILNEKGTNNSFTVEQLIAEVTPKARTLVPDAVKKELLMKIRNILTEIEEEADEPEDES</sequence>
<keyword id="KW-0010">Activator</keyword>
<keyword id="KW-0156">Chromatin regulator</keyword>
<keyword id="KW-0963">Cytoplasm</keyword>
<keyword id="KW-0509">mRNA transport</keyword>
<keyword id="KW-0539">Nucleus</keyword>
<keyword id="KW-0653">Protein transport</keyword>
<keyword id="KW-1185">Reference proteome</keyword>
<keyword id="KW-0804">Transcription</keyword>
<keyword id="KW-0805">Transcription regulation</keyword>
<keyword id="KW-0811">Translocation</keyword>
<keyword id="KW-0813">Transport</keyword>
<reference key="1">
    <citation type="journal article" date="2007" name="Nature">
        <title>Evolution of genes and genomes on the Drosophila phylogeny.</title>
        <authorList>
            <consortium name="Drosophila 12 genomes consortium"/>
        </authorList>
    </citation>
    <scope>NUCLEOTIDE SEQUENCE [LARGE SCALE GENOMIC DNA]</scope>
</reference>